<proteinExistence type="inferred from homology"/>
<reference key="1">
    <citation type="journal article" date="2004" name="Nat. Genet.">
        <title>Comparison of genome degradation in Paratyphi A and Typhi, human-restricted serovars of Salmonella enterica that cause typhoid.</title>
        <authorList>
            <person name="McClelland M."/>
            <person name="Sanderson K.E."/>
            <person name="Clifton S.W."/>
            <person name="Latreille P."/>
            <person name="Porwollik S."/>
            <person name="Sabo A."/>
            <person name="Meyer R."/>
            <person name="Bieri T."/>
            <person name="Ozersky P."/>
            <person name="McLellan M."/>
            <person name="Harkins C.R."/>
            <person name="Wang C."/>
            <person name="Nguyen C."/>
            <person name="Berghoff A."/>
            <person name="Elliott G."/>
            <person name="Kohlberg S."/>
            <person name="Strong C."/>
            <person name="Du F."/>
            <person name="Carter J."/>
            <person name="Kremizki C."/>
            <person name="Layman D."/>
            <person name="Leonard S."/>
            <person name="Sun H."/>
            <person name="Fulton L."/>
            <person name="Nash W."/>
            <person name="Miner T."/>
            <person name="Minx P."/>
            <person name="Delehaunty K."/>
            <person name="Fronick C."/>
            <person name="Magrini V."/>
            <person name="Nhan M."/>
            <person name="Warren W."/>
            <person name="Florea L."/>
            <person name="Spieth J."/>
            <person name="Wilson R.K."/>
        </authorList>
    </citation>
    <scope>NUCLEOTIDE SEQUENCE [LARGE SCALE GENOMIC DNA]</scope>
    <source>
        <strain>ATCC 9150 / SARB42</strain>
    </source>
</reference>
<accession>Q5PH83</accession>
<protein>
    <recommendedName>
        <fullName>Anti-FlhC(2)FlhD(4) factor YdiV</fullName>
    </recommendedName>
</protein>
<feature type="chain" id="PRO_0000346867" description="Anti-FlhC(2)FlhD(4) factor YdiV">
    <location>
        <begin position="1"/>
        <end position="237"/>
    </location>
</feature>
<feature type="domain" description="EAL">
    <location>
        <begin position="1"/>
        <end position="237"/>
    </location>
</feature>
<keyword id="KW-0678">Repressor</keyword>
<keyword id="KW-0804">Transcription</keyword>
<keyword id="KW-0805">Transcription regulation</keyword>
<keyword id="KW-0843">Virulence</keyword>
<name>YDIV_SALPA</name>
<evidence type="ECO:0000250" key="1"/>
<evidence type="ECO:0000305" key="2"/>
<sequence>MIASLDELYHSELFFLPVMDENARLVGLEIIATFAAEDGAVRMPTELVAPRLSVEEQYCLFVEKLALLETCQHFFIQHKLIAWLNLPPAISDLLLLDSELFSRAARFPFLELAINENYPGLNQGKNNETLANLAMHFPLMLANFGAGEASTKAIFDGLFKRVMLDKNFIQQRAEMISFEPFMHAIVAQISSSCESLMIAGIDTEAMFARAAPLGFSAFQGGLWPPVPVSQLIKLVQR</sequence>
<comment type="function">
    <text evidence="1">Acts as an anti-FlhC(2)FlhD(4) factor by binding to FlhD, decreasing its ability to bind DNA, and thus negatively regulates expression of flagellar class II operons, decreasing motility in nutrient-poor medium. Required for resistance to host phagocyte oxidase (By similarity).</text>
</comment>
<comment type="subunit">
    <text evidence="1">Interacts with FlhD in the FlhC(2)FlhD(4) heterohexamer, inhibiting its ability to activate transcription.</text>
</comment>
<comment type="similarity">
    <text evidence="2">Belongs to the YdiV family.</text>
</comment>
<dbReference type="EMBL" id="CP000026">
    <property type="protein sequence ID" value="AAV77432.1"/>
    <property type="molecule type" value="Genomic_DNA"/>
</dbReference>
<dbReference type="RefSeq" id="WP_000562005.1">
    <property type="nucleotide sequence ID" value="NC_006511.1"/>
</dbReference>
<dbReference type="SMR" id="Q5PH83"/>
<dbReference type="KEGG" id="spt:SPA1499"/>
<dbReference type="HOGENOM" id="CLU_089254_1_1_6"/>
<dbReference type="Proteomes" id="UP000008185">
    <property type="component" value="Chromosome"/>
</dbReference>
<dbReference type="GO" id="GO:0071111">
    <property type="term" value="F:cyclic-guanylate-specific phosphodiesterase activity"/>
    <property type="evidence" value="ECO:0007669"/>
    <property type="project" value="InterPro"/>
</dbReference>
<dbReference type="Gene3D" id="3.20.20.450">
    <property type="entry name" value="EAL domain"/>
    <property type="match status" value="1"/>
</dbReference>
<dbReference type="InterPro" id="IPR050706">
    <property type="entry name" value="Cyclic-di-GMP_PDE-like"/>
</dbReference>
<dbReference type="InterPro" id="IPR001633">
    <property type="entry name" value="EAL_dom"/>
</dbReference>
<dbReference type="InterPro" id="IPR035919">
    <property type="entry name" value="EAL_sf"/>
</dbReference>
<dbReference type="PANTHER" id="PTHR33121:SF69">
    <property type="entry name" value="ANTI-FLHC(2)FLHD(4) FACTOR YDIV-RELATED"/>
    <property type="match status" value="1"/>
</dbReference>
<dbReference type="PANTHER" id="PTHR33121">
    <property type="entry name" value="CYCLIC DI-GMP PHOSPHODIESTERASE PDEF"/>
    <property type="match status" value="1"/>
</dbReference>
<dbReference type="Pfam" id="PF00563">
    <property type="entry name" value="EAL"/>
    <property type="match status" value="1"/>
</dbReference>
<dbReference type="SUPFAM" id="SSF141868">
    <property type="entry name" value="EAL domain-like"/>
    <property type="match status" value="1"/>
</dbReference>
<gene>
    <name type="primary">ydiV</name>
    <name type="ordered locus">SPA1499</name>
</gene>
<organism>
    <name type="scientific">Salmonella paratyphi A (strain ATCC 9150 / SARB42)</name>
    <dbReference type="NCBI Taxonomy" id="295319"/>
    <lineage>
        <taxon>Bacteria</taxon>
        <taxon>Pseudomonadati</taxon>
        <taxon>Pseudomonadota</taxon>
        <taxon>Gammaproteobacteria</taxon>
        <taxon>Enterobacterales</taxon>
        <taxon>Enterobacteriaceae</taxon>
        <taxon>Salmonella</taxon>
    </lineage>
</organism>